<protein>
    <recommendedName>
        <fullName>Putative uncharacterized protein WWC2-AS2</fullName>
    </recommendedName>
    <alternativeName>
        <fullName>WWC2 antisense RNA 2</fullName>
    </alternativeName>
    <alternativeName>
        <fullName>WWC2 antisense gene protein 2</fullName>
    </alternativeName>
</protein>
<name>WWAS2_HUMAN</name>
<dbReference type="EMBL" id="AK054839">
    <property type="protein sequence ID" value="BAB70812.1"/>
    <property type="molecule type" value="mRNA"/>
</dbReference>
<dbReference type="EMBL" id="AC019193">
    <property type="status" value="NOT_ANNOTATED_CDS"/>
    <property type="molecule type" value="Genomic_DNA"/>
</dbReference>
<dbReference type="EMBL" id="CH471056">
    <property type="protein sequence ID" value="EAX04695.1"/>
    <property type="molecule type" value="Genomic_DNA"/>
</dbReference>
<dbReference type="EMBL" id="BC126477">
    <property type="status" value="NOT_ANNOTATED_CDS"/>
    <property type="molecule type" value="mRNA"/>
</dbReference>
<dbReference type="EMBL" id="BC126479">
    <property type="status" value="NOT_ANNOTATED_CDS"/>
    <property type="molecule type" value="mRNA"/>
</dbReference>
<dbReference type="GlyGen" id="Q96NR7">
    <property type="glycosylation" value="1 site, 1 O-linked glycan (1 site)"/>
</dbReference>
<dbReference type="BioMuta" id="HGNC:26390"/>
<dbReference type="MassIVE" id="Q96NR7"/>
<dbReference type="PeptideAtlas" id="Q96NR7"/>
<dbReference type="AGR" id="HGNC:26390"/>
<dbReference type="GeneCards" id="WWC2-AS2"/>
<dbReference type="HGNC" id="HGNC:26390">
    <property type="gene designation" value="WWC2-AS2"/>
</dbReference>
<dbReference type="neXtProt" id="NX_Q96NR7"/>
<dbReference type="InParanoid" id="Q96NR7"/>
<dbReference type="PAN-GO" id="Q96NR7">
    <property type="GO annotations" value="0 GO annotations based on evolutionary models"/>
</dbReference>
<dbReference type="PathwayCommons" id="Q96NR7"/>
<dbReference type="Pharos" id="Q96NR7">
    <property type="development level" value="Tdark"/>
</dbReference>
<dbReference type="Proteomes" id="UP000005640">
    <property type="component" value="Unplaced"/>
</dbReference>
<dbReference type="RNAct" id="Q96NR7">
    <property type="molecule type" value="protein"/>
</dbReference>
<comment type="caution">
    <text evidence="2">Product of a dubious CDS prediction.</text>
</comment>
<gene>
    <name type="primary">WWC2-AS2</name>
    <name type="synonym">C4orf38</name>
</gene>
<organism>
    <name type="scientific">Homo sapiens</name>
    <name type="common">Human</name>
    <dbReference type="NCBI Taxonomy" id="9606"/>
    <lineage>
        <taxon>Eukaryota</taxon>
        <taxon>Metazoa</taxon>
        <taxon>Chordata</taxon>
        <taxon>Craniata</taxon>
        <taxon>Vertebrata</taxon>
        <taxon>Euteleostomi</taxon>
        <taxon>Mammalia</taxon>
        <taxon>Eutheria</taxon>
        <taxon>Euarchontoglires</taxon>
        <taxon>Primates</taxon>
        <taxon>Haplorrhini</taxon>
        <taxon>Catarrhini</taxon>
        <taxon>Hominidae</taxon>
        <taxon>Homo</taxon>
    </lineage>
</organism>
<sequence>MTSAETASRAAESGGTPVRPCSRPHRAPSPAAPSRPGAPAAGPRKLLVPGLPCLVRGGWPWTRPDSSPFRPAARPRMSPHRSPAVARRCGRPRRRDPRRRRTPALPRPWPGRGGPGRSLLHRHLFIQQLLRTCWPALPRDRTPAPGGTMPGAALAGPGRQASGSPAPQSEGAPPRPWTPLQPGLHHRPPSSSSGLLSSFF</sequence>
<evidence type="ECO:0000256" key="1">
    <source>
        <dbReference type="SAM" id="MobiDB-lite"/>
    </source>
</evidence>
<evidence type="ECO:0000305" key="2"/>
<keyword id="KW-1185">Reference proteome</keyword>
<accession>Q96NR7</accession>
<feature type="chain" id="PRO_0000341574" description="Putative uncharacterized protein WWC2-AS2">
    <location>
        <begin position="1"/>
        <end position="200"/>
    </location>
</feature>
<feature type="region of interest" description="Disordered" evidence="1">
    <location>
        <begin position="1"/>
        <end position="116"/>
    </location>
</feature>
<feature type="region of interest" description="Disordered" evidence="1">
    <location>
        <begin position="137"/>
        <end position="200"/>
    </location>
</feature>
<feature type="compositionally biased region" description="Low complexity" evidence="1">
    <location>
        <begin position="1"/>
        <end position="13"/>
    </location>
</feature>
<feature type="compositionally biased region" description="Low complexity" evidence="1">
    <location>
        <begin position="28"/>
        <end position="44"/>
    </location>
</feature>
<feature type="compositionally biased region" description="Basic residues" evidence="1">
    <location>
        <begin position="88"/>
        <end position="102"/>
    </location>
</feature>
<feature type="compositionally biased region" description="Low complexity" evidence="1">
    <location>
        <begin position="189"/>
        <end position="200"/>
    </location>
</feature>
<reference key="1">
    <citation type="journal article" date="2004" name="Nat. Genet.">
        <title>Complete sequencing and characterization of 21,243 full-length human cDNAs.</title>
        <authorList>
            <person name="Ota T."/>
            <person name="Suzuki Y."/>
            <person name="Nishikawa T."/>
            <person name="Otsuki T."/>
            <person name="Sugiyama T."/>
            <person name="Irie R."/>
            <person name="Wakamatsu A."/>
            <person name="Hayashi K."/>
            <person name="Sato H."/>
            <person name="Nagai K."/>
            <person name="Kimura K."/>
            <person name="Makita H."/>
            <person name="Sekine M."/>
            <person name="Obayashi M."/>
            <person name="Nishi T."/>
            <person name="Shibahara T."/>
            <person name="Tanaka T."/>
            <person name="Ishii S."/>
            <person name="Yamamoto J."/>
            <person name="Saito K."/>
            <person name="Kawai Y."/>
            <person name="Isono Y."/>
            <person name="Nakamura Y."/>
            <person name="Nagahari K."/>
            <person name="Murakami K."/>
            <person name="Yasuda T."/>
            <person name="Iwayanagi T."/>
            <person name="Wagatsuma M."/>
            <person name="Shiratori A."/>
            <person name="Sudo H."/>
            <person name="Hosoiri T."/>
            <person name="Kaku Y."/>
            <person name="Kodaira H."/>
            <person name="Kondo H."/>
            <person name="Sugawara M."/>
            <person name="Takahashi M."/>
            <person name="Kanda K."/>
            <person name="Yokoi T."/>
            <person name="Furuya T."/>
            <person name="Kikkawa E."/>
            <person name="Omura Y."/>
            <person name="Abe K."/>
            <person name="Kamihara K."/>
            <person name="Katsuta N."/>
            <person name="Sato K."/>
            <person name="Tanikawa M."/>
            <person name="Yamazaki M."/>
            <person name="Ninomiya K."/>
            <person name="Ishibashi T."/>
            <person name="Yamashita H."/>
            <person name="Murakawa K."/>
            <person name="Fujimori K."/>
            <person name="Tanai H."/>
            <person name="Kimata M."/>
            <person name="Watanabe M."/>
            <person name="Hiraoka S."/>
            <person name="Chiba Y."/>
            <person name="Ishida S."/>
            <person name="Ono Y."/>
            <person name="Takiguchi S."/>
            <person name="Watanabe S."/>
            <person name="Yosida M."/>
            <person name="Hotuta T."/>
            <person name="Kusano J."/>
            <person name="Kanehori K."/>
            <person name="Takahashi-Fujii A."/>
            <person name="Hara H."/>
            <person name="Tanase T.-O."/>
            <person name="Nomura Y."/>
            <person name="Togiya S."/>
            <person name="Komai F."/>
            <person name="Hara R."/>
            <person name="Takeuchi K."/>
            <person name="Arita M."/>
            <person name="Imose N."/>
            <person name="Musashino K."/>
            <person name="Yuuki H."/>
            <person name="Oshima A."/>
            <person name="Sasaki N."/>
            <person name="Aotsuka S."/>
            <person name="Yoshikawa Y."/>
            <person name="Matsunawa H."/>
            <person name="Ichihara T."/>
            <person name="Shiohata N."/>
            <person name="Sano S."/>
            <person name="Moriya S."/>
            <person name="Momiyama H."/>
            <person name="Satoh N."/>
            <person name="Takami S."/>
            <person name="Terashima Y."/>
            <person name="Suzuki O."/>
            <person name="Nakagawa S."/>
            <person name="Senoh A."/>
            <person name="Mizoguchi H."/>
            <person name="Goto Y."/>
            <person name="Shimizu F."/>
            <person name="Wakebe H."/>
            <person name="Hishigaki H."/>
            <person name="Watanabe T."/>
            <person name="Sugiyama A."/>
            <person name="Takemoto M."/>
            <person name="Kawakami B."/>
            <person name="Yamazaki M."/>
            <person name="Watanabe K."/>
            <person name="Kumagai A."/>
            <person name="Itakura S."/>
            <person name="Fukuzumi Y."/>
            <person name="Fujimori Y."/>
            <person name="Komiyama M."/>
            <person name="Tashiro H."/>
            <person name="Tanigami A."/>
            <person name="Fujiwara T."/>
            <person name="Ono T."/>
            <person name="Yamada K."/>
            <person name="Fujii Y."/>
            <person name="Ozaki K."/>
            <person name="Hirao M."/>
            <person name="Ohmori Y."/>
            <person name="Kawabata A."/>
            <person name="Hikiji T."/>
            <person name="Kobatake N."/>
            <person name="Inagaki H."/>
            <person name="Ikema Y."/>
            <person name="Okamoto S."/>
            <person name="Okitani R."/>
            <person name="Kawakami T."/>
            <person name="Noguchi S."/>
            <person name="Itoh T."/>
            <person name="Shigeta K."/>
            <person name="Senba T."/>
            <person name="Matsumura K."/>
            <person name="Nakajima Y."/>
            <person name="Mizuno T."/>
            <person name="Morinaga M."/>
            <person name="Sasaki M."/>
            <person name="Togashi T."/>
            <person name="Oyama M."/>
            <person name="Hata H."/>
            <person name="Watanabe M."/>
            <person name="Komatsu T."/>
            <person name="Mizushima-Sugano J."/>
            <person name="Satoh T."/>
            <person name="Shirai Y."/>
            <person name="Takahashi Y."/>
            <person name="Nakagawa K."/>
            <person name="Okumura K."/>
            <person name="Nagase T."/>
            <person name="Nomura N."/>
            <person name="Kikuchi H."/>
            <person name="Masuho Y."/>
            <person name="Yamashita R."/>
            <person name="Nakai K."/>
            <person name="Yada T."/>
            <person name="Nakamura Y."/>
            <person name="Ohara O."/>
            <person name="Isogai T."/>
            <person name="Sugano S."/>
        </authorList>
    </citation>
    <scope>NUCLEOTIDE SEQUENCE [LARGE SCALE MRNA]</scope>
    <source>
        <tissue>Cerebellum</tissue>
    </source>
</reference>
<reference key="2">
    <citation type="journal article" date="2005" name="Nature">
        <title>Generation and annotation of the DNA sequences of human chromosomes 2 and 4.</title>
        <authorList>
            <person name="Hillier L.W."/>
            <person name="Graves T.A."/>
            <person name="Fulton R.S."/>
            <person name="Fulton L.A."/>
            <person name="Pepin K.H."/>
            <person name="Minx P."/>
            <person name="Wagner-McPherson C."/>
            <person name="Layman D."/>
            <person name="Wylie K."/>
            <person name="Sekhon M."/>
            <person name="Becker M.C."/>
            <person name="Fewell G.A."/>
            <person name="Delehaunty K.D."/>
            <person name="Miner T.L."/>
            <person name="Nash W.E."/>
            <person name="Kremitzki C."/>
            <person name="Oddy L."/>
            <person name="Du H."/>
            <person name="Sun H."/>
            <person name="Bradshaw-Cordum H."/>
            <person name="Ali J."/>
            <person name="Carter J."/>
            <person name="Cordes M."/>
            <person name="Harris A."/>
            <person name="Isak A."/>
            <person name="van Brunt A."/>
            <person name="Nguyen C."/>
            <person name="Du F."/>
            <person name="Courtney L."/>
            <person name="Kalicki J."/>
            <person name="Ozersky P."/>
            <person name="Abbott S."/>
            <person name="Armstrong J."/>
            <person name="Belter E.A."/>
            <person name="Caruso L."/>
            <person name="Cedroni M."/>
            <person name="Cotton M."/>
            <person name="Davidson T."/>
            <person name="Desai A."/>
            <person name="Elliott G."/>
            <person name="Erb T."/>
            <person name="Fronick C."/>
            <person name="Gaige T."/>
            <person name="Haakenson W."/>
            <person name="Haglund K."/>
            <person name="Holmes A."/>
            <person name="Harkins R."/>
            <person name="Kim K."/>
            <person name="Kruchowski S.S."/>
            <person name="Strong C.M."/>
            <person name="Grewal N."/>
            <person name="Goyea E."/>
            <person name="Hou S."/>
            <person name="Levy A."/>
            <person name="Martinka S."/>
            <person name="Mead K."/>
            <person name="McLellan M.D."/>
            <person name="Meyer R."/>
            <person name="Randall-Maher J."/>
            <person name="Tomlinson C."/>
            <person name="Dauphin-Kohlberg S."/>
            <person name="Kozlowicz-Reilly A."/>
            <person name="Shah N."/>
            <person name="Swearengen-Shahid S."/>
            <person name="Snider J."/>
            <person name="Strong J.T."/>
            <person name="Thompson J."/>
            <person name="Yoakum M."/>
            <person name="Leonard S."/>
            <person name="Pearman C."/>
            <person name="Trani L."/>
            <person name="Radionenko M."/>
            <person name="Waligorski J.E."/>
            <person name="Wang C."/>
            <person name="Rock S.M."/>
            <person name="Tin-Wollam A.-M."/>
            <person name="Maupin R."/>
            <person name="Latreille P."/>
            <person name="Wendl M.C."/>
            <person name="Yang S.-P."/>
            <person name="Pohl C."/>
            <person name="Wallis J.W."/>
            <person name="Spieth J."/>
            <person name="Bieri T.A."/>
            <person name="Berkowicz N."/>
            <person name="Nelson J.O."/>
            <person name="Osborne J."/>
            <person name="Ding L."/>
            <person name="Meyer R."/>
            <person name="Sabo A."/>
            <person name="Shotland Y."/>
            <person name="Sinha P."/>
            <person name="Wohldmann P.E."/>
            <person name="Cook L.L."/>
            <person name="Hickenbotham M.T."/>
            <person name="Eldred J."/>
            <person name="Williams D."/>
            <person name="Jones T.A."/>
            <person name="She X."/>
            <person name="Ciccarelli F.D."/>
            <person name="Izaurralde E."/>
            <person name="Taylor J."/>
            <person name="Schmutz J."/>
            <person name="Myers R.M."/>
            <person name="Cox D.R."/>
            <person name="Huang X."/>
            <person name="McPherson J.D."/>
            <person name="Mardis E.R."/>
            <person name="Clifton S.W."/>
            <person name="Warren W.C."/>
            <person name="Chinwalla A.T."/>
            <person name="Eddy S.R."/>
            <person name="Marra M.A."/>
            <person name="Ovcharenko I."/>
            <person name="Furey T.S."/>
            <person name="Miller W."/>
            <person name="Eichler E.E."/>
            <person name="Bork P."/>
            <person name="Suyama M."/>
            <person name="Torrents D."/>
            <person name="Waterston R.H."/>
            <person name="Wilson R.K."/>
        </authorList>
    </citation>
    <scope>NUCLEOTIDE SEQUENCE [LARGE SCALE GENOMIC DNA]</scope>
</reference>
<reference key="3">
    <citation type="submission" date="2005-09" db="EMBL/GenBank/DDBJ databases">
        <authorList>
            <person name="Mural R.J."/>
            <person name="Istrail S."/>
            <person name="Sutton G.G."/>
            <person name="Florea L."/>
            <person name="Halpern A.L."/>
            <person name="Mobarry C.M."/>
            <person name="Lippert R."/>
            <person name="Walenz B."/>
            <person name="Shatkay H."/>
            <person name="Dew I."/>
            <person name="Miller J.R."/>
            <person name="Flanigan M.J."/>
            <person name="Edwards N.J."/>
            <person name="Bolanos R."/>
            <person name="Fasulo D."/>
            <person name="Halldorsson B.V."/>
            <person name="Hannenhalli S."/>
            <person name="Turner R."/>
            <person name="Yooseph S."/>
            <person name="Lu F."/>
            <person name="Nusskern D.R."/>
            <person name="Shue B.C."/>
            <person name="Zheng X.H."/>
            <person name="Zhong F."/>
            <person name="Delcher A.L."/>
            <person name="Huson D.H."/>
            <person name="Kravitz S.A."/>
            <person name="Mouchard L."/>
            <person name="Reinert K."/>
            <person name="Remington K.A."/>
            <person name="Clark A.G."/>
            <person name="Waterman M.S."/>
            <person name="Eichler E.E."/>
            <person name="Adams M.D."/>
            <person name="Hunkapiller M.W."/>
            <person name="Myers E.W."/>
            <person name="Venter J.C."/>
        </authorList>
    </citation>
    <scope>NUCLEOTIDE SEQUENCE [LARGE SCALE GENOMIC DNA]</scope>
</reference>
<reference key="4">
    <citation type="journal article" date="2004" name="Genome Res.">
        <title>The status, quality, and expansion of the NIH full-length cDNA project: the Mammalian Gene Collection (MGC).</title>
        <authorList>
            <consortium name="The MGC Project Team"/>
        </authorList>
    </citation>
    <scope>NUCLEOTIDE SEQUENCE [LARGE SCALE MRNA]</scope>
</reference>
<proteinExistence type="uncertain"/>